<accession>Q04NU7</accession>
<protein>
    <recommendedName>
        <fullName evidence="1">Ferrochelatase</fullName>
        <ecNumber evidence="1">4.98.1.1</ecNumber>
    </recommendedName>
    <alternativeName>
        <fullName evidence="1">Heme synthase</fullName>
    </alternativeName>
    <alternativeName>
        <fullName evidence="1">Protoheme ferro-lyase</fullName>
    </alternativeName>
</protein>
<gene>
    <name evidence="1" type="primary">hemH</name>
    <name type="ordered locus">LBJ_4018</name>
</gene>
<name>HEMH_LEPBJ</name>
<dbReference type="EC" id="4.98.1.1" evidence="1"/>
<dbReference type="EMBL" id="CP000351">
    <property type="protein sequence ID" value="ABJ77423.1"/>
    <property type="molecule type" value="Genomic_DNA"/>
</dbReference>
<dbReference type="SMR" id="Q04NU7"/>
<dbReference type="KEGG" id="lbj:LBJ_4018"/>
<dbReference type="HOGENOM" id="CLU_018884_4_1_12"/>
<dbReference type="UniPathway" id="UPA00252">
    <property type="reaction ID" value="UER00325"/>
</dbReference>
<dbReference type="Proteomes" id="UP000000656">
    <property type="component" value="Chromosome 2"/>
</dbReference>
<dbReference type="GO" id="GO:0005737">
    <property type="term" value="C:cytoplasm"/>
    <property type="evidence" value="ECO:0007669"/>
    <property type="project" value="UniProtKB-SubCell"/>
</dbReference>
<dbReference type="GO" id="GO:0004325">
    <property type="term" value="F:ferrochelatase activity"/>
    <property type="evidence" value="ECO:0007669"/>
    <property type="project" value="UniProtKB-UniRule"/>
</dbReference>
<dbReference type="GO" id="GO:0046872">
    <property type="term" value="F:metal ion binding"/>
    <property type="evidence" value="ECO:0007669"/>
    <property type="project" value="UniProtKB-KW"/>
</dbReference>
<dbReference type="GO" id="GO:0006783">
    <property type="term" value="P:heme biosynthetic process"/>
    <property type="evidence" value="ECO:0007669"/>
    <property type="project" value="UniProtKB-UniRule"/>
</dbReference>
<dbReference type="CDD" id="cd00419">
    <property type="entry name" value="Ferrochelatase_C"/>
    <property type="match status" value="1"/>
</dbReference>
<dbReference type="CDD" id="cd03411">
    <property type="entry name" value="Ferrochelatase_N"/>
    <property type="match status" value="1"/>
</dbReference>
<dbReference type="Gene3D" id="3.40.50.1400">
    <property type="match status" value="2"/>
</dbReference>
<dbReference type="HAMAP" id="MF_00323">
    <property type="entry name" value="Ferrochelatase"/>
    <property type="match status" value="1"/>
</dbReference>
<dbReference type="InterPro" id="IPR001015">
    <property type="entry name" value="Ferrochelatase"/>
</dbReference>
<dbReference type="InterPro" id="IPR019772">
    <property type="entry name" value="Ferrochelatase_AS"/>
</dbReference>
<dbReference type="InterPro" id="IPR033644">
    <property type="entry name" value="Ferrochelatase_C"/>
</dbReference>
<dbReference type="InterPro" id="IPR033659">
    <property type="entry name" value="Ferrochelatase_N"/>
</dbReference>
<dbReference type="NCBIfam" id="TIGR00109">
    <property type="entry name" value="hemH"/>
    <property type="match status" value="1"/>
</dbReference>
<dbReference type="PANTHER" id="PTHR11108">
    <property type="entry name" value="FERROCHELATASE"/>
    <property type="match status" value="1"/>
</dbReference>
<dbReference type="PANTHER" id="PTHR11108:SF1">
    <property type="entry name" value="FERROCHELATASE, MITOCHONDRIAL"/>
    <property type="match status" value="1"/>
</dbReference>
<dbReference type="Pfam" id="PF00762">
    <property type="entry name" value="Ferrochelatase"/>
    <property type="match status" value="1"/>
</dbReference>
<dbReference type="SUPFAM" id="SSF53800">
    <property type="entry name" value="Chelatase"/>
    <property type="match status" value="1"/>
</dbReference>
<dbReference type="PROSITE" id="PS00534">
    <property type="entry name" value="FERROCHELATASE"/>
    <property type="match status" value="1"/>
</dbReference>
<proteinExistence type="inferred from homology"/>
<keyword id="KW-0963">Cytoplasm</keyword>
<keyword id="KW-0350">Heme biosynthesis</keyword>
<keyword id="KW-0408">Iron</keyword>
<keyword id="KW-0456">Lyase</keyword>
<keyword id="KW-0479">Metal-binding</keyword>
<keyword id="KW-0627">Porphyrin biosynthesis</keyword>
<organism>
    <name type="scientific">Leptospira borgpetersenii serovar Hardjo-bovis (strain JB197)</name>
    <dbReference type="NCBI Taxonomy" id="355277"/>
    <lineage>
        <taxon>Bacteria</taxon>
        <taxon>Pseudomonadati</taxon>
        <taxon>Spirochaetota</taxon>
        <taxon>Spirochaetia</taxon>
        <taxon>Leptospirales</taxon>
        <taxon>Leptospiraceae</taxon>
        <taxon>Leptospira</taxon>
    </lineage>
</organism>
<sequence>MKNRILLINLGGPRDTSEIEKFLIDLFEDPLVFDLPLPEWIRKPLGKWVAKKRAPKVAQTYKSMGFGGGSPLVSETSKQANAIAKALEKITGEKWEGNITMTCGYPDIRKLNRDFLVPTKQNILLPLYPHFSRSTVLSTAKLVEQTTKFCPVSYEGWVAPFHSSQVYLESIRDLILDFFQNRLNRKDFLHSDSFQGVSNWETIDLIFSAHGIPIRLIEKGDRYREEINSNVENLKRLLYEKGFQGKCHTSFQSRVGPSKWTEPNTITMLEQLGKNGVKRVAVYPISFVSDHLETLEEIGEQLKKIAYNNGIAEYHRIPAPGIYPKFIEAMAKIGLESIQSSKNECICKKLGGHFPNLKSGECPINF</sequence>
<reference key="1">
    <citation type="journal article" date="2006" name="Proc. Natl. Acad. Sci. U.S.A.">
        <title>Genome reduction in Leptospira borgpetersenii reflects limited transmission potential.</title>
        <authorList>
            <person name="Bulach D.M."/>
            <person name="Zuerner R.L."/>
            <person name="Wilson P."/>
            <person name="Seemann T."/>
            <person name="McGrath A."/>
            <person name="Cullen P.A."/>
            <person name="Davis J."/>
            <person name="Johnson M."/>
            <person name="Kuczek E."/>
            <person name="Alt D.P."/>
            <person name="Peterson-Burch B."/>
            <person name="Coppel R.L."/>
            <person name="Rood J.I."/>
            <person name="Davies J.K."/>
            <person name="Adler B."/>
        </authorList>
    </citation>
    <scope>NUCLEOTIDE SEQUENCE [LARGE SCALE GENOMIC DNA]</scope>
    <source>
        <strain>JB197</strain>
    </source>
</reference>
<evidence type="ECO:0000255" key="1">
    <source>
        <dbReference type="HAMAP-Rule" id="MF_00323"/>
    </source>
</evidence>
<comment type="function">
    <text evidence="1">Catalyzes the ferrous insertion into protoporphyrin IX.</text>
</comment>
<comment type="catalytic activity">
    <reaction evidence="1">
        <text>heme b + 2 H(+) = protoporphyrin IX + Fe(2+)</text>
        <dbReference type="Rhea" id="RHEA:22584"/>
        <dbReference type="ChEBI" id="CHEBI:15378"/>
        <dbReference type="ChEBI" id="CHEBI:29033"/>
        <dbReference type="ChEBI" id="CHEBI:57306"/>
        <dbReference type="ChEBI" id="CHEBI:60344"/>
        <dbReference type="EC" id="4.98.1.1"/>
    </reaction>
</comment>
<comment type="pathway">
    <text evidence="1">Porphyrin-containing compound metabolism; protoheme biosynthesis; protoheme from protoporphyrin-IX: step 1/1.</text>
</comment>
<comment type="subcellular location">
    <subcellularLocation>
        <location evidence="1">Cytoplasm</location>
    </subcellularLocation>
</comment>
<comment type="similarity">
    <text evidence="1">Belongs to the ferrochelatase family.</text>
</comment>
<feature type="chain" id="PRO_1000019315" description="Ferrochelatase">
    <location>
        <begin position="1"/>
        <end position="366"/>
    </location>
</feature>
<feature type="binding site" evidence="1">
    <location>
        <position position="210"/>
    </location>
    <ligand>
        <name>Fe cation</name>
        <dbReference type="ChEBI" id="CHEBI:24875"/>
    </ligand>
</feature>
<feature type="binding site" evidence="1">
    <location>
        <position position="293"/>
    </location>
    <ligand>
        <name>Fe cation</name>
        <dbReference type="ChEBI" id="CHEBI:24875"/>
    </ligand>
</feature>